<gene>
    <name evidence="1" type="primary">psbT</name>
</gene>
<organism>
    <name type="scientific">Calycanthus floridus var. glaucus</name>
    <name type="common">Eastern sweetshrub</name>
    <name type="synonym">Calycanthus fertilis var. ferax</name>
    <dbReference type="NCBI Taxonomy" id="212734"/>
    <lineage>
        <taxon>Eukaryota</taxon>
        <taxon>Viridiplantae</taxon>
        <taxon>Streptophyta</taxon>
        <taxon>Embryophyta</taxon>
        <taxon>Tracheophyta</taxon>
        <taxon>Spermatophyta</taxon>
        <taxon>Magnoliopsida</taxon>
        <taxon>Magnoliidae</taxon>
        <taxon>Laurales</taxon>
        <taxon>Calycanthaceae</taxon>
        <taxon>Calycanthus</taxon>
    </lineage>
</organism>
<reference key="1">
    <citation type="journal article" date="2003" name="Plant Syst. Evol.">
        <title>The chloroplast genome of the 'basal' angiosperm Calycanthus fertilis -- structural and phylogenetic analyses.</title>
        <authorList>
            <person name="Goremykin V."/>
            <person name="Hirsch-Ernst K.I."/>
            <person name="Woelfl S."/>
            <person name="Hellwig F.H."/>
        </authorList>
    </citation>
    <scope>NUCLEOTIDE SEQUENCE [LARGE SCALE GENOMIC DNA]</scope>
</reference>
<keyword id="KW-0150">Chloroplast</keyword>
<keyword id="KW-0472">Membrane</keyword>
<keyword id="KW-0602">Photosynthesis</keyword>
<keyword id="KW-0604">Photosystem II</keyword>
<keyword id="KW-0934">Plastid</keyword>
<keyword id="KW-0793">Thylakoid</keyword>
<keyword id="KW-0812">Transmembrane</keyword>
<keyword id="KW-1133">Transmembrane helix</keyword>
<sequence>MEALVYTFLLVSTLGIIFFAIFFREPPKVPTKKMK</sequence>
<protein>
    <recommendedName>
        <fullName evidence="1">Photosystem II reaction center protein T</fullName>
        <shortName evidence="1">PSII-T</shortName>
    </recommendedName>
</protein>
<accession>Q7YJV0</accession>
<comment type="function">
    <text evidence="1">Found at the monomer-monomer interface of the photosystem II (PS II) dimer, plays a role in assembly and dimerization of PSII. PSII is a light-driven water plastoquinone oxidoreductase, using light energy to abstract electrons from H(2)O, generating a proton gradient subsequently used for ATP formation.</text>
</comment>
<comment type="subunit">
    <text evidence="1">PSII is composed of 1 copy each of membrane proteins PsbA, PsbB, PsbC, PsbD, PsbE, PsbF, PsbH, PsbI, PsbJ, PsbK, PsbL, PsbM, PsbT, PsbY, PsbZ, Psb30/Ycf12, at least 3 peripheral proteins of the oxygen-evolving complex and a large number of cofactors. It forms dimeric complexes.</text>
</comment>
<comment type="subcellular location">
    <subcellularLocation>
        <location evidence="1">Plastid</location>
        <location evidence="1">Chloroplast thylakoid membrane</location>
        <topology evidence="1">Single-pass membrane protein</topology>
    </subcellularLocation>
</comment>
<comment type="similarity">
    <text evidence="1">Belongs to the PsbT family.</text>
</comment>
<name>PSBT_CALFG</name>
<dbReference type="EMBL" id="AJ428413">
    <property type="protein sequence ID" value="CAD28747.1"/>
    <property type="molecule type" value="Genomic_DNA"/>
</dbReference>
<dbReference type="RefSeq" id="NP_862780.1">
    <property type="nucleotide sequence ID" value="NC_004993.1"/>
</dbReference>
<dbReference type="SMR" id="Q7YJV0"/>
<dbReference type="GeneID" id="2598019"/>
<dbReference type="GO" id="GO:0009535">
    <property type="term" value="C:chloroplast thylakoid membrane"/>
    <property type="evidence" value="ECO:0007669"/>
    <property type="project" value="UniProtKB-SubCell"/>
</dbReference>
<dbReference type="GO" id="GO:0009539">
    <property type="term" value="C:photosystem II reaction center"/>
    <property type="evidence" value="ECO:0007669"/>
    <property type="project" value="InterPro"/>
</dbReference>
<dbReference type="GO" id="GO:0015979">
    <property type="term" value="P:photosynthesis"/>
    <property type="evidence" value="ECO:0007669"/>
    <property type="project" value="UniProtKB-UniRule"/>
</dbReference>
<dbReference type="HAMAP" id="MF_00808">
    <property type="entry name" value="PSII_PsbT"/>
    <property type="match status" value="1"/>
</dbReference>
<dbReference type="InterPro" id="IPR001743">
    <property type="entry name" value="PSII_PsbT"/>
</dbReference>
<dbReference type="InterPro" id="IPR037268">
    <property type="entry name" value="PSII_PsbT_sf"/>
</dbReference>
<dbReference type="PANTHER" id="PTHR36411">
    <property type="match status" value="1"/>
</dbReference>
<dbReference type="PANTHER" id="PTHR36411:SF2">
    <property type="entry name" value="PHOTOSYSTEM II REACTION CENTER PROTEIN T"/>
    <property type="match status" value="1"/>
</dbReference>
<dbReference type="Pfam" id="PF01405">
    <property type="entry name" value="PsbT"/>
    <property type="match status" value="1"/>
</dbReference>
<dbReference type="SUPFAM" id="SSF161029">
    <property type="entry name" value="Photosystem II reaction center protein T, PsbT"/>
    <property type="match status" value="1"/>
</dbReference>
<geneLocation type="chloroplast"/>
<proteinExistence type="inferred from homology"/>
<feature type="chain" id="PRO_0000217910" description="Photosystem II reaction center protein T">
    <location>
        <begin position="1"/>
        <end position="35"/>
    </location>
</feature>
<feature type="transmembrane region" description="Helical" evidence="1">
    <location>
        <begin position="3"/>
        <end position="23"/>
    </location>
</feature>
<evidence type="ECO:0000255" key="1">
    <source>
        <dbReference type="HAMAP-Rule" id="MF_00808"/>
    </source>
</evidence>